<dbReference type="EMBL" id="BC095903">
    <property type="protein sequence ID" value="AAH95903.1"/>
    <property type="molecule type" value="mRNA"/>
</dbReference>
<dbReference type="EMBL" id="AF227190">
    <property type="protein sequence ID" value="AAF74120.1"/>
    <property type="molecule type" value="mRNA"/>
</dbReference>
<dbReference type="EMBL" id="AF227191">
    <property type="protein sequence ID" value="AAF74121.1"/>
    <property type="molecule type" value="mRNA"/>
</dbReference>
<dbReference type="RefSeq" id="NP_001019936.1">
    <property type="nucleotide sequence ID" value="NM_001024765.1"/>
</dbReference>
<dbReference type="SMR" id="Q501R9"/>
<dbReference type="BioGRID" id="257580">
    <property type="interactions" value="6"/>
</dbReference>
<dbReference type="CORUM" id="Q501R9"/>
<dbReference type="FunCoup" id="Q501R9">
    <property type="interactions" value="1941"/>
</dbReference>
<dbReference type="STRING" id="10116.ENSRNOP00000028149"/>
<dbReference type="CarbonylDB" id="Q501R9"/>
<dbReference type="iPTMnet" id="Q501R9"/>
<dbReference type="PhosphoSitePlus" id="Q501R9"/>
<dbReference type="PaxDb" id="10116-ENSRNOP00000028149"/>
<dbReference type="GeneID" id="303554"/>
<dbReference type="KEGG" id="rno:303554"/>
<dbReference type="UCSC" id="RGD:69195">
    <property type="organism name" value="rat"/>
</dbReference>
<dbReference type="AGR" id="RGD:69195"/>
<dbReference type="CTD" id="4077"/>
<dbReference type="RGD" id="69195">
    <property type="gene designation" value="Nbr1"/>
</dbReference>
<dbReference type="eggNOG" id="KOG4351">
    <property type="taxonomic scope" value="Eukaryota"/>
</dbReference>
<dbReference type="eggNOG" id="KOG4582">
    <property type="taxonomic scope" value="Eukaryota"/>
</dbReference>
<dbReference type="InParanoid" id="Q501R9"/>
<dbReference type="PhylomeDB" id="Q501R9"/>
<dbReference type="Reactome" id="R-RNO-9664873">
    <property type="pathway name" value="Pexophagy"/>
</dbReference>
<dbReference type="PRO" id="PR:Q501R9"/>
<dbReference type="Proteomes" id="UP000002494">
    <property type="component" value="Unplaced"/>
</dbReference>
<dbReference type="GO" id="GO:0005776">
    <property type="term" value="C:autophagosome"/>
    <property type="evidence" value="ECO:0000266"/>
    <property type="project" value="RGD"/>
</dbReference>
<dbReference type="GO" id="GO:0005829">
    <property type="term" value="C:cytosol"/>
    <property type="evidence" value="ECO:0000250"/>
    <property type="project" value="UniProtKB"/>
</dbReference>
<dbReference type="GO" id="GO:0005770">
    <property type="term" value="C:late endosome"/>
    <property type="evidence" value="ECO:0000250"/>
    <property type="project" value="UniProtKB"/>
</dbReference>
<dbReference type="GO" id="GO:0005764">
    <property type="term" value="C:lysosome"/>
    <property type="evidence" value="ECO:0007669"/>
    <property type="project" value="UniProtKB-SubCell"/>
</dbReference>
<dbReference type="GO" id="GO:0031430">
    <property type="term" value="C:M band"/>
    <property type="evidence" value="ECO:0007669"/>
    <property type="project" value="UniProtKB-SubCell"/>
</dbReference>
<dbReference type="GO" id="GO:0005758">
    <property type="term" value="C:mitochondrial intermembrane space"/>
    <property type="evidence" value="ECO:0000266"/>
    <property type="project" value="RGD"/>
</dbReference>
<dbReference type="GO" id="GO:0005739">
    <property type="term" value="C:mitochondrion"/>
    <property type="evidence" value="ECO:0000266"/>
    <property type="project" value="RGD"/>
</dbReference>
<dbReference type="GO" id="GO:0000407">
    <property type="term" value="C:phagophore assembly site"/>
    <property type="evidence" value="ECO:0000266"/>
    <property type="project" value="RGD"/>
</dbReference>
<dbReference type="GO" id="GO:0043235">
    <property type="term" value="C:receptor complex"/>
    <property type="evidence" value="ECO:0000250"/>
    <property type="project" value="UniProtKB"/>
</dbReference>
<dbReference type="GO" id="GO:0051019">
    <property type="term" value="F:mitogen-activated protein kinase binding"/>
    <property type="evidence" value="ECO:0000266"/>
    <property type="project" value="RGD"/>
</dbReference>
<dbReference type="GO" id="GO:0043130">
    <property type="term" value="F:ubiquitin binding"/>
    <property type="evidence" value="ECO:0000250"/>
    <property type="project" value="UniProtKB"/>
</dbReference>
<dbReference type="GO" id="GO:0008270">
    <property type="term" value="F:zinc ion binding"/>
    <property type="evidence" value="ECO:0007669"/>
    <property type="project" value="UniProtKB-KW"/>
</dbReference>
<dbReference type="GO" id="GO:0016236">
    <property type="term" value="P:macroautophagy"/>
    <property type="evidence" value="ECO:0000250"/>
    <property type="project" value="UniProtKB"/>
</dbReference>
<dbReference type="GO" id="GO:0045668">
    <property type="term" value="P:negative regulation of osteoblast differentiation"/>
    <property type="evidence" value="ECO:0000266"/>
    <property type="project" value="RGD"/>
</dbReference>
<dbReference type="GO" id="GO:0030500">
    <property type="term" value="P:regulation of bone mineralization"/>
    <property type="evidence" value="ECO:0000266"/>
    <property type="project" value="RGD"/>
</dbReference>
<dbReference type="GO" id="GO:0032872">
    <property type="term" value="P:regulation of stress-activated MAPK cascade"/>
    <property type="evidence" value="ECO:0000266"/>
    <property type="project" value="RGD"/>
</dbReference>
<dbReference type="CDD" id="cd14947">
    <property type="entry name" value="NBR1_like"/>
    <property type="match status" value="1"/>
</dbReference>
<dbReference type="CDD" id="cd06396">
    <property type="entry name" value="PB1_NBR1"/>
    <property type="match status" value="1"/>
</dbReference>
<dbReference type="CDD" id="cd14319">
    <property type="entry name" value="UBA_NBR1"/>
    <property type="match status" value="1"/>
</dbReference>
<dbReference type="CDD" id="cd02340">
    <property type="entry name" value="ZZ_NBR1_like"/>
    <property type="match status" value="1"/>
</dbReference>
<dbReference type="FunFam" id="1.10.8.10:FF:000033">
    <property type="entry name" value="Next to BRCA1 gene 1 protein"/>
    <property type="match status" value="1"/>
</dbReference>
<dbReference type="FunFam" id="3.10.20.90:FF:000292">
    <property type="entry name" value="Next to BRCA1 gene 1 protein"/>
    <property type="match status" value="1"/>
</dbReference>
<dbReference type="FunFam" id="3.30.60.90:FF:000007">
    <property type="entry name" value="Next to BRCA1 gene 1 protein"/>
    <property type="match status" value="1"/>
</dbReference>
<dbReference type="FunFam" id="2.60.40.10:FF:000199">
    <property type="entry name" value="next to BRCA1 gene 1 protein-like"/>
    <property type="match status" value="1"/>
</dbReference>
<dbReference type="Gene3D" id="3.30.60.90">
    <property type="match status" value="1"/>
</dbReference>
<dbReference type="Gene3D" id="1.10.8.10">
    <property type="entry name" value="DNA helicase RuvA subunit, C-terminal domain"/>
    <property type="match status" value="1"/>
</dbReference>
<dbReference type="Gene3D" id="2.60.40.10">
    <property type="entry name" value="Immunoglobulins"/>
    <property type="match status" value="1"/>
</dbReference>
<dbReference type="Gene3D" id="3.10.20.90">
    <property type="entry name" value="Phosphatidylinositol 3-kinase Catalytic Subunit, Chain A, domain 1"/>
    <property type="match status" value="1"/>
</dbReference>
<dbReference type="InterPro" id="IPR013783">
    <property type="entry name" value="Ig-like_fold"/>
</dbReference>
<dbReference type="InterPro" id="IPR032350">
    <property type="entry name" value="N_BRCA1_central"/>
</dbReference>
<dbReference type="InterPro" id="IPR053793">
    <property type="entry name" value="PB1-like"/>
</dbReference>
<dbReference type="InterPro" id="IPR000270">
    <property type="entry name" value="PB1_dom"/>
</dbReference>
<dbReference type="InterPro" id="IPR034852">
    <property type="entry name" value="PB1_NBR1"/>
</dbReference>
<dbReference type="InterPro" id="IPR015940">
    <property type="entry name" value="UBA"/>
</dbReference>
<dbReference type="InterPro" id="IPR009060">
    <property type="entry name" value="UBA-like_sf"/>
</dbReference>
<dbReference type="InterPro" id="IPR056893">
    <property type="entry name" value="UBA_NBR1_C"/>
</dbReference>
<dbReference type="InterPro" id="IPR000433">
    <property type="entry name" value="Znf_ZZ"/>
</dbReference>
<dbReference type="InterPro" id="IPR043145">
    <property type="entry name" value="Znf_ZZ_sf"/>
</dbReference>
<dbReference type="PANTHER" id="PTHR20930:SF2">
    <property type="entry name" value="NEXT TO BRCA1 GENE 1 PROTEIN"/>
    <property type="match status" value="1"/>
</dbReference>
<dbReference type="PANTHER" id="PTHR20930">
    <property type="entry name" value="OVARIAN CARCINOMA ANTIGEN CA125-RELATED"/>
    <property type="match status" value="1"/>
</dbReference>
<dbReference type="Pfam" id="PF16158">
    <property type="entry name" value="N_BRCA1_IG"/>
    <property type="match status" value="1"/>
</dbReference>
<dbReference type="Pfam" id="PF00564">
    <property type="entry name" value="PB1"/>
    <property type="match status" value="1"/>
</dbReference>
<dbReference type="Pfam" id="PF24932">
    <property type="entry name" value="UBA_NBR1_C"/>
    <property type="match status" value="1"/>
</dbReference>
<dbReference type="Pfam" id="PF00569">
    <property type="entry name" value="ZZ"/>
    <property type="match status" value="1"/>
</dbReference>
<dbReference type="SMART" id="SM00666">
    <property type="entry name" value="PB1"/>
    <property type="match status" value="1"/>
</dbReference>
<dbReference type="SMART" id="SM00291">
    <property type="entry name" value="ZnF_ZZ"/>
    <property type="match status" value="1"/>
</dbReference>
<dbReference type="SUPFAM" id="SSF54277">
    <property type="entry name" value="CAD &amp; PB1 domains"/>
    <property type="match status" value="1"/>
</dbReference>
<dbReference type="SUPFAM" id="SSF57850">
    <property type="entry name" value="RING/U-box"/>
    <property type="match status" value="1"/>
</dbReference>
<dbReference type="SUPFAM" id="SSF46934">
    <property type="entry name" value="UBA-like"/>
    <property type="match status" value="1"/>
</dbReference>
<dbReference type="PROSITE" id="PS51745">
    <property type="entry name" value="PB1"/>
    <property type="match status" value="1"/>
</dbReference>
<dbReference type="PROSITE" id="PS50030">
    <property type="entry name" value="UBA"/>
    <property type="match status" value="1"/>
</dbReference>
<dbReference type="PROSITE" id="PS01357">
    <property type="entry name" value="ZF_ZZ_1"/>
    <property type="match status" value="1"/>
</dbReference>
<dbReference type="PROSITE" id="PS50135">
    <property type="entry name" value="ZF_ZZ_2"/>
    <property type="match status" value="1"/>
</dbReference>
<name>NBR1_RAT</name>
<comment type="function">
    <text evidence="2 3">Ubiquitin-binding autophagy adapter that participates in different processes including host defense or intracellular homeostasis. Possesses a double function during the selective autophagy by acting as a shuttle bringing ubiquitinated proteins to autophagosomes and also by participating in the formation of protein aggregates. Plays a role in the regulation of the innate immune response by modulating type I interferon production and targeting ubiquitinated IRF3 for autophagic degradation (By similarity). In response to oxidative stress, promotes an increase in SQSTM1 levels, phosphorylation, and body formation by preventing its autophagic degradation (By similarity). In turn, activates the KEAP1-NRF2/NFE2L2 antioxidant pathway (By similarity). Also plays non-autophagy role by mediating the shuttle of IL-12 to late endosome for subsequent secretion (By similarity).</text>
</comment>
<comment type="subunit">
    <text evidence="2 3 8">Homooligomer and heterooligomer (By similarity). Interacts with TRIM55 (PubMed:15802564). Interacts with titin/TTN (PubMed:15802564). Interacts with RNF29, USP8, MAP1LC3A, MAP1LC3B, MAP1LC3C, GABARAP, GABARAPL1 and GABARAPL2 (By similarity). Binds to ubiquitin and ubiquitinated proteins (By similarity). Interacts with SQSTM1 (PubMed:15802564). Interacts with TAX1BP1 (By similarity). Interacts with IRF3; this interaction mediates autophagic degradation of IRF3 (By similarity). Interacts with IL12A and IL12B (By similarity).</text>
</comment>
<comment type="subcellular location">
    <subcellularLocation>
        <location evidence="3">Cytoplasm</location>
    </subcellularLocation>
    <subcellularLocation>
        <location evidence="3">Cytoplasmic vesicle</location>
        <location evidence="3">Autophagosome</location>
    </subcellularLocation>
    <subcellularLocation>
        <location evidence="3">Lysosome</location>
    </subcellularLocation>
    <subcellularLocation>
        <location evidence="8">Cytoplasm</location>
        <location evidence="8">Myofibril</location>
        <location evidence="8">Sarcomere</location>
        <location evidence="8">M line</location>
    </subcellularLocation>
    <text evidence="3 8">In cardiac muscles localizes to the sarcomeric M line (PubMed:15802564). Is targeted to lysosomes for degradation (By similarity).</text>
</comment>
<comment type="domain">
    <text evidence="1">The PB1 domain mediates interaction with SQSTM1.</text>
</comment>
<comment type="PTM">
    <text evidence="3">Phosphorylated by GSK3A; this phosphorylation inhibits NBR1 involvement in the formation of ubiquitinated protein aggregates.</text>
</comment>
<accession>Q501R9</accession>
<accession>Q9JHG4</accession>
<keyword id="KW-0963">Cytoplasm</keyword>
<keyword id="KW-0968">Cytoplasmic vesicle</keyword>
<keyword id="KW-0458">Lysosome</keyword>
<keyword id="KW-0479">Metal-binding</keyword>
<keyword id="KW-0597">Phosphoprotein</keyword>
<keyword id="KW-1185">Reference proteome</keyword>
<keyword id="KW-0832">Ubl conjugation</keyword>
<keyword id="KW-0862">Zinc</keyword>
<keyword id="KW-0863">Zinc-finger</keyword>
<feature type="chain" id="PRO_0000096749" description="Next to BRCA1 gene 1 protein">
    <location>
        <begin position="1"/>
        <end position="983"/>
    </location>
</feature>
<feature type="domain" description="PB1" evidence="6">
    <location>
        <begin position="4"/>
        <end position="86"/>
    </location>
</feature>
<feature type="domain" description="UBA" evidence="4">
    <location>
        <begin position="930"/>
        <end position="974"/>
    </location>
</feature>
<feature type="zinc finger region" description="ZZ-type" evidence="5">
    <location>
        <begin position="214"/>
        <end position="266"/>
    </location>
</feature>
<feature type="region of interest" description="Disordered" evidence="7">
    <location>
        <begin position="126"/>
        <end position="149"/>
    </location>
</feature>
<feature type="region of interest" description="ATG8 family proteins-binding" evidence="1">
    <location>
        <begin position="544"/>
        <end position="638"/>
    </location>
</feature>
<feature type="region of interest" description="Disordered" evidence="7">
    <location>
        <begin position="611"/>
        <end position="645"/>
    </location>
</feature>
<feature type="region of interest" description="ATG8 family proteins-binding" evidence="1">
    <location>
        <begin position="745"/>
        <end position="756"/>
    </location>
</feature>
<feature type="region of interest" description="Disordered" evidence="7">
    <location>
        <begin position="768"/>
        <end position="813"/>
    </location>
</feature>
<feature type="region of interest" description="Disordered" evidence="7">
    <location>
        <begin position="867"/>
        <end position="894"/>
    </location>
</feature>
<feature type="compositionally biased region" description="Basic and acidic residues" evidence="7">
    <location>
        <begin position="795"/>
        <end position="808"/>
    </location>
</feature>
<feature type="binding site" evidence="5">
    <location>
        <position position="219"/>
    </location>
    <ligand>
        <name>Zn(2+)</name>
        <dbReference type="ChEBI" id="CHEBI:29105"/>
        <label>1</label>
    </ligand>
</feature>
<feature type="binding site" evidence="5">
    <location>
        <position position="222"/>
    </location>
    <ligand>
        <name>Zn(2+)</name>
        <dbReference type="ChEBI" id="CHEBI:29105"/>
        <label>1</label>
    </ligand>
</feature>
<feature type="binding site" evidence="5">
    <location>
        <position position="233"/>
    </location>
    <ligand>
        <name>Zn(2+)</name>
        <dbReference type="ChEBI" id="CHEBI:29105"/>
        <label>2</label>
    </ligand>
</feature>
<feature type="binding site" evidence="5">
    <location>
        <position position="236"/>
    </location>
    <ligand>
        <name>Zn(2+)</name>
        <dbReference type="ChEBI" id="CHEBI:29105"/>
        <label>2</label>
    </ligand>
</feature>
<feature type="binding site" evidence="5">
    <location>
        <position position="242"/>
    </location>
    <ligand>
        <name>Zn(2+)</name>
        <dbReference type="ChEBI" id="CHEBI:29105"/>
        <label>1</label>
    </ligand>
</feature>
<feature type="binding site" evidence="5">
    <location>
        <position position="245"/>
    </location>
    <ligand>
        <name>Zn(2+)</name>
        <dbReference type="ChEBI" id="CHEBI:29105"/>
        <label>1</label>
    </ligand>
</feature>
<feature type="binding site" evidence="5">
    <location>
        <position position="252"/>
    </location>
    <ligand>
        <name>Zn(2+)</name>
        <dbReference type="ChEBI" id="CHEBI:29105"/>
        <label>2</label>
    </ligand>
</feature>
<feature type="binding site" evidence="5">
    <location>
        <position position="256"/>
    </location>
    <ligand>
        <name>Zn(2+)</name>
        <dbReference type="ChEBI" id="CHEBI:29105"/>
        <label>2</label>
    </ligand>
</feature>
<feature type="modified residue" description="Phosphoserine" evidence="3">
    <location>
        <position position="117"/>
    </location>
</feature>
<feature type="modified residue" description="Phosphothreonine" evidence="3">
    <location>
        <position position="588"/>
    </location>
</feature>
<feature type="modified residue" description="Phosphoserine" evidence="9">
    <location>
        <position position="592"/>
    </location>
</feature>
<feature type="modified residue" description="Phosphoserine" evidence="9">
    <location>
        <position position="598"/>
    </location>
</feature>
<feature type="modified residue" description="Phosphoserine" evidence="9">
    <location>
        <position position="855"/>
    </location>
</feature>
<evidence type="ECO:0000250" key="1"/>
<evidence type="ECO:0000250" key="2">
    <source>
        <dbReference type="UniProtKB" id="P97432"/>
    </source>
</evidence>
<evidence type="ECO:0000250" key="3">
    <source>
        <dbReference type="UniProtKB" id="Q14596"/>
    </source>
</evidence>
<evidence type="ECO:0000255" key="4">
    <source>
        <dbReference type="PROSITE-ProRule" id="PRU00212"/>
    </source>
</evidence>
<evidence type="ECO:0000255" key="5">
    <source>
        <dbReference type="PROSITE-ProRule" id="PRU00228"/>
    </source>
</evidence>
<evidence type="ECO:0000255" key="6">
    <source>
        <dbReference type="PROSITE-ProRule" id="PRU01081"/>
    </source>
</evidence>
<evidence type="ECO:0000256" key="7">
    <source>
        <dbReference type="SAM" id="MobiDB-lite"/>
    </source>
</evidence>
<evidence type="ECO:0000269" key="8">
    <source>
    </source>
</evidence>
<evidence type="ECO:0007744" key="9">
    <source>
    </source>
</evidence>
<proteinExistence type="evidence at protein level"/>
<protein>
    <recommendedName>
        <fullName>Next to BRCA1 gene 1 protein</fullName>
    </recommendedName>
    <alternativeName>
        <fullName>Neighbor of BRCA1 gene 1 protein</fullName>
    </alternativeName>
</protein>
<reference key="1">
    <citation type="journal article" date="2004" name="Genome Res.">
        <title>The status, quality, and expansion of the NIH full-length cDNA project: the Mammalian Gene Collection (MGC).</title>
        <authorList>
            <consortium name="The MGC Project Team"/>
        </authorList>
    </citation>
    <scope>NUCLEOTIDE SEQUENCE [LARGE SCALE MRNA]</scope>
    <source>
        <tissue>Lung</tissue>
    </source>
</reference>
<reference key="2">
    <citation type="journal article" date="2001" name="Gene">
        <title>Expression profiles and intergenic structure of head-to-head oriented Brca1 and Nbr1 genes.</title>
        <authorList>
            <person name="Dimitrov S."/>
            <person name="Brennerova M."/>
            <person name="Forejt J."/>
        </authorList>
    </citation>
    <scope>NUCLEOTIDE SEQUENCE [MRNA] OF 1-43</scope>
    <source>
        <strain>SHR</strain>
        <tissue>Testis</tissue>
    </source>
</reference>
<reference key="3">
    <citation type="journal article" date="2005" name="Science">
        <title>The kinase domain of titin controls muscle gene expression and protein turnover.</title>
        <authorList>
            <person name="Lange S."/>
            <person name="Xiang F."/>
            <person name="Yakovenko A."/>
            <person name="Vihola A."/>
            <person name="Hackman P."/>
            <person name="Rostkova E."/>
            <person name="Kristensen J."/>
            <person name="Brandmeier B."/>
            <person name="Franzen G."/>
            <person name="Hedberg B."/>
            <person name="Gunnarsson L.G."/>
            <person name="Hughes S.M."/>
            <person name="Marchand S."/>
            <person name="Sejersen T."/>
            <person name="Richard I."/>
            <person name="Edstroem L."/>
            <person name="Ehler E."/>
            <person name="Udd B."/>
            <person name="Gautel M."/>
        </authorList>
    </citation>
    <scope>INTERACTION WITH SQSTM1; TTN AND TRIM55</scope>
    <scope>SUBCELLULAR LOCATION</scope>
</reference>
<reference key="4">
    <citation type="journal article" date="2012" name="Nat. Commun.">
        <title>Quantitative maps of protein phosphorylation sites across 14 different rat organs and tissues.</title>
        <authorList>
            <person name="Lundby A."/>
            <person name="Secher A."/>
            <person name="Lage K."/>
            <person name="Nordsborg N.B."/>
            <person name="Dmytriyev A."/>
            <person name="Lundby C."/>
            <person name="Olsen J.V."/>
        </authorList>
    </citation>
    <scope>PHOSPHORYLATION [LARGE SCALE ANALYSIS] AT SER-592; SER-598 AND SER-855</scope>
    <scope>IDENTIFICATION BY MASS SPECTROMETRY [LARGE SCALE ANALYSIS]</scope>
</reference>
<sequence length="983" mass="109829">MEPQVTLNVTFKNETQSFLVSDPENTTWADVEAMVKVSFDLNTIQIKYLDEENEEISINSQGEYEEALKMANIKQGNQLQMQVHEGCHVVDEVLPQTVVEKQATARTGKKPLAHYSSLVRVLGSDMKTTEEPTAEARSPVPCDTDKPQDKPPDWFTSYLEMFREQVVKETVEKLEQRLQEKLVLQKPPFSSSPSEVSMPISEEETLFLPENQFSWHIACSHCQKRIVGVRYQCSLCPSYNICEDCEAGPYSHDTNHILLKFRRPVVISSEPFFYSKYPTPRLPAALEQVRLQKQVDKNFVKAEKQRLRAEKKQRKAEVKELKKQLKLHRKIHLWNSIHGLQSPKSPLGRPESLLQSNTLMLPLQPCAPVMPTLSAAFVDENLPDGTHLQPGTKFIKHWRMKNTGNVKWSADTKLKFMWGNLTLASTEKKDVLVPCLKAGHIGVVSVEFIAPTLEGTYTLHWRLSHKGQQFGPRVWCSIIVDPFPSSESPVNLERDGISSSKADDFTCEQEEAFLLAEEEIPLGEVTKQTEGTGSSAPQKTQHAASERELYIPSVDLLTAQDLLSFELLDINIVQELERVPHNTPVDVTPRMSPLPHDSPLIEKPGLGRIQEESEGAGLKASPDSTVLTKRKAETPASVEETEEDLSGTQFVCETVIRSLTLDAAPDHNPPCRQRSPQRELQLYSTEEQQPLMLPGFCRKDSSLKFALPEEGPHGDEREEIVHIAEEEAIEEEDVQDEEVQSQSSASSEDYIIILPECFDTSRPLGDSMYSSALSQPGLERGAEGEPGIESGQEPAEARERLPERESQPKEQSISDILTTSQHLDTVPLVPEVAGLPAALSRSAPCGQYEAPRVDSPVTIQEVLPVPDHVRGEPRGSTGLANSRQKSCDHSRHHNGSSIAGGLVKGALSVAASAYKALFSGPPVTAQPVISEDQTAALMAHLFEMGFCDRQLNLRLLRKHNHNILQVVTELLQVNNNDWYSHRY</sequence>
<organism>
    <name type="scientific">Rattus norvegicus</name>
    <name type="common">Rat</name>
    <dbReference type="NCBI Taxonomy" id="10116"/>
    <lineage>
        <taxon>Eukaryota</taxon>
        <taxon>Metazoa</taxon>
        <taxon>Chordata</taxon>
        <taxon>Craniata</taxon>
        <taxon>Vertebrata</taxon>
        <taxon>Euteleostomi</taxon>
        <taxon>Mammalia</taxon>
        <taxon>Eutheria</taxon>
        <taxon>Euarchontoglires</taxon>
        <taxon>Glires</taxon>
        <taxon>Rodentia</taxon>
        <taxon>Myomorpha</taxon>
        <taxon>Muroidea</taxon>
        <taxon>Muridae</taxon>
        <taxon>Murinae</taxon>
        <taxon>Rattus</taxon>
    </lineage>
</organism>
<gene>
    <name type="primary">Nbr1</name>
</gene>